<protein>
    <recommendedName>
        <fullName>TATA box-binding protein-associated factor RNA polymerase I subunit A</fullName>
    </recommendedName>
    <alternativeName>
        <fullName>RNA polymerase I-specific TBP-associated factor 48 kDa</fullName>
        <shortName>TAFI48</shortName>
    </alternativeName>
    <alternativeName>
        <fullName>TATA box-binding protein-associated factor 1A</fullName>
        <shortName>TBP-associated factor 1A</shortName>
    </alternativeName>
    <alternativeName>
        <fullName>Transcription factor SL1</fullName>
    </alternativeName>
    <alternativeName>
        <fullName>Transcription initiation factor SL1/TIF-IB subunit A</fullName>
    </alternativeName>
</protein>
<dbReference type="EMBL" id="L39060">
    <property type="protein sequence ID" value="AAA62862.1"/>
    <property type="molecule type" value="mRNA"/>
</dbReference>
<dbReference type="EMBL" id="AK001054">
    <property type="protein sequence ID" value="BAA91482.1"/>
    <property type="molecule type" value="mRNA"/>
</dbReference>
<dbReference type="EMBL" id="AK315740">
    <property type="protein sequence ID" value="BAG38095.1"/>
    <property type="molecule type" value="mRNA"/>
</dbReference>
<dbReference type="EMBL" id="AL592148">
    <property type="status" value="NOT_ANNOTATED_CDS"/>
    <property type="molecule type" value="Genomic_DNA"/>
</dbReference>
<dbReference type="EMBL" id="CH471100">
    <property type="protein sequence ID" value="EAW93271.1"/>
    <property type="molecule type" value="Genomic_DNA"/>
</dbReference>
<dbReference type="EMBL" id="CH471100">
    <property type="protein sequence ID" value="EAW93272.1"/>
    <property type="molecule type" value="Genomic_DNA"/>
</dbReference>
<dbReference type="EMBL" id="BC013808">
    <property type="protein sequence ID" value="AAH13808.1"/>
    <property type="molecule type" value="mRNA"/>
</dbReference>
<dbReference type="CCDS" id="CCDS1531.1">
    <molecule id="Q15573-1"/>
</dbReference>
<dbReference type="CCDS" id="CCDS1532.1">
    <molecule id="Q15573-2"/>
</dbReference>
<dbReference type="PIR" id="I61580">
    <property type="entry name" value="I61580"/>
</dbReference>
<dbReference type="RefSeq" id="NP_001188465.1">
    <molecule id="Q15573-1"/>
    <property type="nucleotide sequence ID" value="NM_001201536.1"/>
</dbReference>
<dbReference type="RefSeq" id="NP_005672.1">
    <molecule id="Q15573-1"/>
    <property type="nucleotide sequence ID" value="NM_005681.4"/>
</dbReference>
<dbReference type="RefSeq" id="NP_647603.1">
    <molecule id="Q15573-2"/>
    <property type="nucleotide sequence ID" value="NM_139352.2"/>
</dbReference>
<dbReference type="RefSeq" id="XP_006711676.1">
    <property type="nucleotide sequence ID" value="XM_006711613.3"/>
</dbReference>
<dbReference type="RefSeq" id="XP_016858248.1">
    <property type="nucleotide sequence ID" value="XM_017002759.1"/>
</dbReference>
<dbReference type="RefSeq" id="XP_016858249.1">
    <property type="nucleotide sequence ID" value="XM_017002760.1"/>
</dbReference>
<dbReference type="RefSeq" id="XP_047289549.1">
    <molecule id="Q15573-2"/>
    <property type="nucleotide sequence ID" value="XM_047433593.1"/>
</dbReference>
<dbReference type="RefSeq" id="XP_047289552.1">
    <molecule id="Q15573-2"/>
    <property type="nucleotide sequence ID" value="XM_047433596.1"/>
</dbReference>
<dbReference type="RefSeq" id="XP_054195465.1">
    <molecule id="Q15573-2"/>
    <property type="nucleotide sequence ID" value="XM_054339490.1"/>
</dbReference>
<dbReference type="RefSeq" id="XP_054195466.1">
    <molecule id="Q15573-2"/>
    <property type="nucleotide sequence ID" value="XM_054339491.1"/>
</dbReference>
<dbReference type="SMR" id="Q15573"/>
<dbReference type="BioGRID" id="114484">
    <property type="interactions" value="84"/>
</dbReference>
<dbReference type="ComplexPortal" id="CPX-7978">
    <property type="entry name" value="RNA polymerase I selectivity factor 1 complex"/>
</dbReference>
<dbReference type="CORUM" id="Q15573"/>
<dbReference type="FunCoup" id="Q15573">
    <property type="interactions" value="1616"/>
</dbReference>
<dbReference type="IntAct" id="Q15573">
    <property type="interactions" value="56"/>
</dbReference>
<dbReference type="MINT" id="Q15573"/>
<dbReference type="STRING" id="9606.ENSP00000339976"/>
<dbReference type="BindingDB" id="Q15573"/>
<dbReference type="ChEMBL" id="CHEMBL4105882"/>
<dbReference type="iPTMnet" id="Q15573"/>
<dbReference type="PhosphoSitePlus" id="Q15573"/>
<dbReference type="BioMuta" id="TAF1A"/>
<dbReference type="DMDM" id="74739864"/>
<dbReference type="jPOST" id="Q15573"/>
<dbReference type="MassIVE" id="Q15573"/>
<dbReference type="PaxDb" id="9606-ENSP00000339976"/>
<dbReference type="PeptideAtlas" id="Q15573"/>
<dbReference type="ProteomicsDB" id="60643">
    <molecule id="Q15573-1"/>
</dbReference>
<dbReference type="ProteomicsDB" id="60644">
    <molecule id="Q15573-2"/>
</dbReference>
<dbReference type="Pumba" id="Q15573"/>
<dbReference type="Antibodypedia" id="20741">
    <property type="antibodies" value="231 antibodies from 29 providers"/>
</dbReference>
<dbReference type="DNASU" id="9015"/>
<dbReference type="Ensembl" id="ENST00000350027.8">
    <molecule id="Q15573-1"/>
    <property type="protein sequence ID" value="ENSP00000339976.4"/>
    <property type="gene ID" value="ENSG00000143498.18"/>
</dbReference>
<dbReference type="Ensembl" id="ENST00000352967.9">
    <molecule id="Q15573-1"/>
    <property type="protein sequence ID" value="ENSP00000327072.6"/>
    <property type="gene ID" value="ENSG00000143498.18"/>
</dbReference>
<dbReference type="Ensembl" id="ENST00000366890.5">
    <molecule id="Q15573-2"/>
    <property type="protein sequence ID" value="ENSP00000355856.1"/>
    <property type="gene ID" value="ENSG00000143498.18"/>
</dbReference>
<dbReference type="GeneID" id="9015"/>
<dbReference type="KEGG" id="hsa:9015"/>
<dbReference type="MANE-Select" id="ENST00000352967.9">
    <property type="protein sequence ID" value="ENSP00000327072.6"/>
    <property type="RefSeq nucleotide sequence ID" value="NM_005681.4"/>
    <property type="RefSeq protein sequence ID" value="NP_005672.1"/>
</dbReference>
<dbReference type="UCSC" id="uc001hni.3">
    <molecule id="Q15573-1"/>
    <property type="organism name" value="human"/>
</dbReference>
<dbReference type="AGR" id="HGNC:11532"/>
<dbReference type="CTD" id="9015"/>
<dbReference type="DisGeNET" id="9015"/>
<dbReference type="GeneCards" id="TAF1A"/>
<dbReference type="HGNC" id="HGNC:11532">
    <property type="gene designation" value="TAF1A"/>
</dbReference>
<dbReference type="HPA" id="ENSG00000143498">
    <property type="expression patterns" value="Low tissue specificity"/>
</dbReference>
<dbReference type="MalaCards" id="TAF1A"/>
<dbReference type="MIM" id="604903">
    <property type="type" value="gene"/>
</dbReference>
<dbReference type="neXtProt" id="NX_Q15573"/>
<dbReference type="OpenTargets" id="ENSG00000143498"/>
<dbReference type="Orphanet" id="154">
    <property type="disease" value="Familial isolated dilated cardiomyopathy"/>
</dbReference>
<dbReference type="PharmGKB" id="PA36307"/>
<dbReference type="VEuPathDB" id="HostDB:ENSG00000143498"/>
<dbReference type="eggNOG" id="ENOG502R510">
    <property type="taxonomic scope" value="Eukaryota"/>
</dbReference>
<dbReference type="GeneTree" id="ENSGT00390000011405"/>
<dbReference type="HOGENOM" id="CLU_049461_0_0_1"/>
<dbReference type="InParanoid" id="Q15573"/>
<dbReference type="OMA" id="HFTRFHA"/>
<dbReference type="OrthoDB" id="6272197at2759"/>
<dbReference type="PAN-GO" id="Q15573">
    <property type="GO annotations" value="0 GO annotations based on evolutionary models"/>
</dbReference>
<dbReference type="PhylomeDB" id="Q15573"/>
<dbReference type="TreeFam" id="TF330958"/>
<dbReference type="PathwayCommons" id="Q15573"/>
<dbReference type="Reactome" id="R-HSA-427359">
    <property type="pathway name" value="SIRT1 negatively regulates rRNA expression"/>
</dbReference>
<dbReference type="Reactome" id="R-HSA-427413">
    <property type="pathway name" value="NoRC negatively regulates rRNA expression"/>
</dbReference>
<dbReference type="Reactome" id="R-HSA-5250924">
    <property type="pathway name" value="B-WICH complex positively regulates rRNA expression"/>
</dbReference>
<dbReference type="Reactome" id="R-HSA-73762">
    <property type="pathway name" value="RNA Polymerase I Transcription Initiation"/>
</dbReference>
<dbReference type="Reactome" id="R-HSA-73772">
    <property type="pathway name" value="RNA Polymerase I Promoter Escape"/>
</dbReference>
<dbReference type="Reactome" id="R-HSA-73863">
    <property type="pathway name" value="RNA Polymerase I Transcription Termination"/>
</dbReference>
<dbReference type="SignaLink" id="Q15573"/>
<dbReference type="SIGNOR" id="Q15573"/>
<dbReference type="BioGRID-ORCS" id="9015">
    <property type="hits" value="474 hits in 1159 CRISPR screens"/>
</dbReference>
<dbReference type="GeneWiki" id="TAF1A"/>
<dbReference type="GenomeRNAi" id="9015"/>
<dbReference type="Pharos" id="Q15573">
    <property type="development level" value="Tbio"/>
</dbReference>
<dbReference type="PRO" id="PR:Q15573"/>
<dbReference type="Proteomes" id="UP000005640">
    <property type="component" value="Chromosome 1"/>
</dbReference>
<dbReference type="RNAct" id="Q15573">
    <property type="molecule type" value="protein"/>
</dbReference>
<dbReference type="Bgee" id="ENSG00000143498">
    <property type="expression patterns" value="Expressed in oocyte and 146 other cell types or tissues"/>
</dbReference>
<dbReference type="ExpressionAtlas" id="Q15573">
    <property type="expression patterns" value="baseline and differential"/>
</dbReference>
<dbReference type="GO" id="GO:0015630">
    <property type="term" value="C:microtubule cytoskeleton"/>
    <property type="evidence" value="ECO:0000314"/>
    <property type="project" value="HPA"/>
</dbReference>
<dbReference type="GO" id="GO:0005654">
    <property type="term" value="C:nucleoplasm"/>
    <property type="evidence" value="ECO:0000314"/>
    <property type="project" value="HPA"/>
</dbReference>
<dbReference type="GO" id="GO:0005668">
    <property type="term" value="C:RNA polymerase transcription factor SL1 complex"/>
    <property type="evidence" value="ECO:0000314"/>
    <property type="project" value="UniProtKB"/>
</dbReference>
<dbReference type="GO" id="GO:0003677">
    <property type="term" value="F:DNA binding"/>
    <property type="evidence" value="ECO:0007669"/>
    <property type="project" value="UniProtKB-KW"/>
</dbReference>
<dbReference type="GO" id="GO:0006360">
    <property type="term" value="P:transcription by RNA polymerase I"/>
    <property type="evidence" value="ECO:0000304"/>
    <property type="project" value="ProtInc"/>
</dbReference>
<dbReference type="GO" id="GO:0006366">
    <property type="term" value="P:transcription by RNA polymerase II"/>
    <property type="evidence" value="ECO:0000304"/>
    <property type="project" value="ProtInc"/>
</dbReference>
<dbReference type="InterPro" id="IPR016629">
    <property type="entry name" value="RNA_pol_I_TAF1A/TAFI48_chr"/>
</dbReference>
<dbReference type="InterPro" id="IPR052669">
    <property type="entry name" value="SL1/TIF-IB_Component"/>
</dbReference>
<dbReference type="InterPro" id="IPR039495">
    <property type="entry name" value="TAF1A"/>
</dbReference>
<dbReference type="PANTHER" id="PTHR32122">
    <property type="entry name" value="TATA BOX-BINDING PROTEIN ASSOCIATED FACTOR RNA POLYMERASE I SUBUNIT A"/>
    <property type="match status" value="1"/>
</dbReference>
<dbReference type="PANTHER" id="PTHR32122:SF1">
    <property type="entry name" value="TATA BOX-BINDING PROTEIN-ASSOCIATED FACTOR RNA POLYMERASE I SUBUNIT A"/>
    <property type="match status" value="1"/>
</dbReference>
<dbReference type="Pfam" id="PF14929">
    <property type="entry name" value="TAF1_subA"/>
    <property type="match status" value="1"/>
</dbReference>
<dbReference type="PIRSF" id="PIRSF015161">
    <property type="entry name" value="TAFI48"/>
    <property type="match status" value="1"/>
</dbReference>
<evidence type="ECO:0000269" key="1">
    <source>
    </source>
</evidence>
<evidence type="ECO:0000269" key="2">
    <source>
    </source>
</evidence>
<evidence type="ECO:0000269" key="3">
    <source>
    </source>
</evidence>
<evidence type="ECO:0000269" key="4">
    <source>
    </source>
</evidence>
<evidence type="ECO:0000269" key="5">
    <source>
    </source>
</evidence>
<evidence type="ECO:0000269" key="6">
    <source>
    </source>
</evidence>
<evidence type="ECO:0000303" key="7">
    <source>
    </source>
</evidence>
<evidence type="ECO:0000305" key="8">
    <source>
    </source>
</evidence>
<evidence type="ECO:0000305" key="9">
    <source>
    </source>
</evidence>
<accession>Q15573</accession>
<accession>B2RDZ8</accession>
<accession>D3DTB7</accession>
<accession>Q9NWA1</accession>
<proteinExistence type="evidence at protein level"/>
<sequence length="450" mass="52676">MSDFSEELKGPVTDDEEVETSVLSGAGMHFPWLQTYVETVAIGGKRRKDFAQTTSACLSFIQEALLKHQWQQAAEYMYSYFQTLEDSDSYKRQAAPEIIWKLGSEILFYHPKSNMESFNTFANRMKNIGVMNYLKISLQHALYLLHHGMLKDAKRNLSEAETWRHGENTSSREILINLIQAYKGLLQYYTWSEKKMELSKLDKDDYAYNAVAQDVFNHSWKTSANISALIKIPGVWDPFVKSYVEMLEFYGDRDGAQEVLTNYAYDEKFPSNPNAHIYLYNFLKRQKAPRSKLISVLKILYQIVPSHKLMLEFHTLLRKSEKEEHRKLGLEVLFGVLDFAGCTKNITAWKYLAKYLKNILMGNHLAWVQEEWNSRKNWWPGFHFSYFWAKSDWKEDTALACEKAFVAGLLLGKGCRYFRYILKQDHQILGKKIKRMKRSVKKYSIVNPRL</sequence>
<feature type="chain" id="PRO_0000227987" description="TATA box-binding protein-associated factor RNA polymerase I subunit A">
    <location>
        <begin position="1"/>
        <end position="450"/>
    </location>
</feature>
<feature type="splice variant" id="VSP_017635" description="In isoform 2." evidence="7">
    <location>
        <begin position="1"/>
        <end position="114"/>
    </location>
</feature>
<feature type="sequence variant" id="VAR_052253" description="In dbSNP:rs17163271.">
    <original>I</original>
    <variation>M</variation>
    <location>
        <position position="98"/>
    </location>
</feature>
<reference key="1">
    <citation type="journal article" date="1994" name="Science">
        <title>Reconstitution of transcription factor SL1: exclusive binding of TBP by SL1 or TFIID subunits.</title>
        <authorList>
            <person name="Comai L."/>
            <person name="Zomerdijk J.C.B.M."/>
            <person name="Beckmann H."/>
            <person name="Zhou S."/>
            <person name="Admon A."/>
            <person name="Tjian R."/>
        </authorList>
    </citation>
    <scope>NUCLEOTIDE SEQUENCE [MRNA] (ISOFORM 1)</scope>
    <scope>PROTEIN SEQUENCE OF 68-84; 113-123; 155-169; 183-193; 205-219; 221-230; 404-413 AND 442-449</scope>
    <scope>FUNCTION</scope>
    <scope>INTERACTION WITH TBP; TAF1B AND TAF1C</scope>
</reference>
<reference key="2">
    <citation type="journal article" date="2004" name="Nat. Genet.">
        <title>Complete sequencing and characterization of 21,243 full-length human cDNAs.</title>
        <authorList>
            <person name="Ota T."/>
            <person name="Suzuki Y."/>
            <person name="Nishikawa T."/>
            <person name="Otsuki T."/>
            <person name="Sugiyama T."/>
            <person name="Irie R."/>
            <person name="Wakamatsu A."/>
            <person name="Hayashi K."/>
            <person name="Sato H."/>
            <person name="Nagai K."/>
            <person name="Kimura K."/>
            <person name="Makita H."/>
            <person name="Sekine M."/>
            <person name="Obayashi M."/>
            <person name="Nishi T."/>
            <person name="Shibahara T."/>
            <person name="Tanaka T."/>
            <person name="Ishii S."/>
            <person name="Yamamoto J."/>
            <person name="Saito K."/>
            <person name="Kawai Y."/>
            <person name="Isono Y."/>
            <person name="Nakamura Y."/>
            <person name="Nagahari K."/>
            <person name="Murakami K."/>
            <person name="Yasuda T."/>
            <person name="Iwayanagi T."/>
            <person name="Wagatsuma M."/>
            <person name="Shiratori A."/>
            <person name="Sudo H."/>
            <person name="Hosoiri T."/>
            <person name="Kaku Y."/>
            <person name="Kodaira H."/>
            <person name="Kondo H."/>
            <person name="Sugawara M."/>
            <person name="Takahashi M."/>
            <person name="Kanda K."/>
            <person name="Yokoi T."/>
            <person name="Furuya T."/>
            <person name="Kikkawa E."/>
            <person name="Omura Y."/>
            <person name="Abe K."/>
            <person name="Kamihara K."/>
            <person name="Katsuta N."/>
            <person name="Sato K."/>
            <person name="Tanikawa M."/>
            <person name="Yamazaki M."/>
            <person name="Ninomiya K."/>
            <person name="Ishibashi T."/>
            <person name="Yamashita H."/>
            <person name="Murakawa K."/>
            <person name="Fujimori K."/>
            <person name="Tanai H."/>
            <person name="Kimata M."/>
            <person name="Watanabe M."/>
            <person name="Hiraoka S."/>
            <person name="Chiba Y."/>
            <person name="Ishida S."/>
            <person name="Ono Y."/>
            <person name="Takiguchi S."/>
            <person name="Watanabe S."/>
            <person name="Yosida M."/>
            <person name="Hotuta T."/>
            <person name="Kusano J."/>
            <person name="Kanehori K."/>
            <person name="Takahashi-Fujii A."/>
            <person name="Hara H."/>
            <person name="Tanase T.-O."/>
            <person name="Nomura Y."/>
            <person name="Togiya S."/>
            <person name="Komai F."/>
            <person name="Hara R."/>
            <person name="Takeuchi K."/>
            <person name="Arita M."/>
            <person name="Imose N."/>
            <person name="Musashino K."/>
            <person name="Yuuki H."/>
            <person name="Oshima A."/>
            <person name="Sasaki N."/>
            <person name="Aotsuka S."/>
            <person name="Yoshikawa Y."/>
            <person name="Matsunawa H."/>
            <person name="Ichihara T."/>
            <person name="Shiohata N."/>
            <person name="Sano S."/>
            <person name="Moriya S."/>
            <person name="Momiyama H."/>
            <person name="Satoh N."/>
            <person name="Takami S."/>
            <person name="Terashima Y."/>
            <person name="Suzuki O."/>
            <person name="Nakagawa S."/>
            <person name="Senoh A."/>
            <person name="Mizoguchi H."/>
            <person name="Goto Y."/>
            <person name="Shimizu F."/>
            <person name="Wakebe H."/>
            <person name="Hishigaki H."/>
            <person name="Watanabe T."/>
            <person name="Sugiyama A."/>
            <person name="Takemoto M."/>
            <person name="Kawakami B."/>
            <person name="Yamazaki M."/>
            <person name="Watanabe K."/>
            <person name="Kumagai A."/>
            <person name="Itakura S."/>
            <person name="Fukuzumi Y."/>
            <person name="Fujimori Y."/>
            <person name="Komiyama M."/>
            <person name="Tashiro H."/>
            <person name="Tanigami A."/>
            <person name="Fujiwara T."/>
            <person name="Ono T."/>
            <person name="Yamada K."/>
            <person name="Fujii Y."/>
            <person name="Ozaki K."/>
            <person name="Hirao M."/>
            <person name="Ohmori Y."/>
            <person name="Kawabata A."/>
            <person name="Hikiji T."/>
            <person name="Kobatake N."/>
            <person name="Inagaki H."/>
            <person name="Ikema Y."/>
            <person name="Okamoto S."/>
            <person name="Okitani R."/>
            <person name="Kawakami T."/>
            <person name="Noguchi S."/>
            <person name="Itoh T."/>
            <person name="Shigeta K."/>
            <person name="Senba T."/>
            <person name="Matsumura K."/>
            <person name="Nakajima Y."/>
            <person name="Mizuno T."/>
            <person name="Morinaga M."/>
            <person name="Sasaki M."/>
            <person name="Togashi T."/>
            <person name="Oyama M."/>
            <person name="Hata H."/>
            <person name="Watanabe M."/>
            <person name="Komatsu T."/>
            <person name="Mizushima-Sugano J."/>
            <person name="Satoh T."/>
            <person name="Shirai Y."/>
            <person name="Takahashi Y."/>
            <person name="Nakagawa K."/>
            <person name="Okumura K."/>
            <person name="Nagase T."/>
            <person name="Nomura N."/>
            <person name="Kikuchi H."/>
            <person name="Masuho Y."/>
            <person name="Yamashita R."/>
            <person name="Nakai K."/>
            <person name="Yada T."/>
            <person name="Nakamura Y."/>
            <person name="Ohara O."/>
            <person name="Isogai T."/>
            <person name="Sugano S."/>
        </authorList>
    </citation>
    <scope>NUCLEOTIDE SEQUENCE [LARGE SCALE MRNA] (ISOFORMS 1 AND 2)</scope>
    <source>
        <tissue>Embryo</tissue>
        <tissue>Kidney</tissue>
    </source>
</reference>
<reference key="3">
    <citation type="journal article" date="2006" name="Nature">
        <title>The DNA sequence and biological annotation of human chromosome 1.</title>
        <authorList>
            <person name="Gregory S.G."/>
            <person name="Barlow K.F."/>
            <person name="McLay K.E."/>
            <person name="Kaul R."/>
            <person name="Swarbreck D."/>
            <person name="Dunham A."/>
            <person name="Scott C.E."/>
            <person name="Howe K.L."/>
            <person name="Woodfine K."/>
            <person name="Spencer C.C.A."/>
            <person name="Jones M.C."/>
            <person name="Gillson C."/>
            <person name="Searle S."/>
            <person name="Zhou Y."/>
            <person name="Kokocinski F."/>
            <person name="McDonald L."/>
            <person name="Evans R."/>
            <person name="Phillips K."/>
            <person name="Atkinson A."/>
            <person name="Cooper R."/>
            <person name="Jones C."/>
            <person name="Hall R.E."/>
            <person name="Andrews T.D."/>
            <person name="Lloyd C."/>
            <person name="Ainscough R."/>
            <person name="Almeida J.P."/>
            <person name="Ambrose K.D."/>
            <person name="Anderson F."/>
            <person name="Andrew R.W."/>
            <person name="Ashwell R.I.S."/>
            <person name="Aubin K."/>
            <person name="Babbage A.K."/>
            <person name="Bagguley C.L."/>
            <person name="Bailey J."/>
            <person name="Beasley H."/>
            <person name="Bethel G."/>
            <person name="Bird C.P."/>
            <person name="Bray-Allen S."/>
            <person name="Brown J.Y."/>
            <person name="Brown A.J."/>
            <person name="Buckley D."/>
            <person name="Burton J."/>
            <person name="Bye J."/>
            <person name="Carder C."/>
            <person name="Chapman J.C."/>
            <person name="Clark S.Y."/>
            <person name="Clarke G."/>
            <person name="Clee C."/>
            <person name="Cobley V."/>
            <person name="Collier R.E."/>
            <person name="Corby N."/>
            <person name="Coville G.J."/>
            <person name="Davies J."/>
            <person name="Deadman R."/>
            <person name="Dunn M."/>
            <person name="Earthrowl M."/>
            <person name="Ellington A.G."/>
            <person name="Errington H."/>
            <person name="Frankish A."/>
            <person name="Frankland J."/>
            <person name="French L."/>
            <person name="Garner P."/>
            <person name="Garnett J."/>
            <person name="Gay L."/>
            <person name="Ghori M.R.J."/>
            <person name="Gibson R."/>
            <person name="Gilby L.M."/>
            <person name="Gillett W."/>
            <person name="Glithero R.J."/>
            <person name="Grafham D.V."/>
            <person name="Griffiths C."/>
            <person name="Griffiths-Jones S."/>
            <person name="Grocock R."/>
            <person name="Hammond S."/>
            <person name="Harrison E.S.I."/>
            <person name="Hart E."/>
            <person name="Haugen E."/>
            <person name="Heath P.D."/>
            <person name="Holmes S."/>
            <person name="Holt K."/>
            <person name="Howden P.J."/>
            <person name="Hunt A.R."/>
            <person name="Hunt S.E."/>
            <person name="Hunter G."/>
            <person name="Isherwood J."/>
            <person name="James R."/>
            <person name="Johnson C."/>
            <person name="Johnson D."/>
            <person name="Joy A."/>
            <person name="Kay M."/>
            <person name="Kershaw J.K."/>
            <person name="Kibukawa M."/>
            <person name="Kimberley A.M."/>
            <person name="King A."/>
            <person name="Knights A.J."/>
            <person name="Lad H."/>
            <person name="Laird G."/>
            <person name="Lawlor S."/>
            <person name="Leongamornlert D.A."/>
            <person name="Lloyd D.M."/>
            <person name="Loveland J."/>
            <person name="Lovell J."/>
            <person name="Lush M.J."/>
            <person name="Lyne R."/>
            <person name="Martin S."/>
            <person name="Mashreghi-Mohammadi M."/>
            <person name="Matthews L."/>
            <person name="Matthews N.S.W."/>
            <person name="McLaren S."/>
            <person name="Milne S."/>
            <person name="Mistry S."/>
            <person name="Moore M.J.F."/>
            <person name="Nickerson T."/>
            <person name="O'Dell C.N."/>
            <person name="Oliver K."/>
            <person name="Palmeiri A."/>
            <person name="Palmer S.A."/>
            <person name="Parker A."/>
            <person name="Patel D."/>
            <person name="Pearce A.V."/>
            <person name="Peck A.I."/>
            <person name="Pelan S."/>
            <person name="Phelps K."/>
            <person name="Phillimore B.J."/>
            <person name="Plumb R."/>
            <person name="Rajan J."/>
            <person name="Raymond C."/>
            <person name="Rouse G."/>
            <person name="Saenphimmachak C."/>
            <person name="Sehra H.K."/>
            <person name="Sheridan E."/>
            <person name="Shownkeen R."/>
            <person name="Sims S."/>
            <person name="Skuce C.D."/>
            <person name="Smith M."/>
            <person name="Steward C."/>
            <person name="Subramanian S."/>
            <person name="Sycamore N."/>
            <person name="Tracey A."/>
            <person name="Tromans A."/>
            <person name="Van Helmond Z."/>
            <person name="Wall M."/>
            <person name="Wallis J.M."/>
            <person name="White S."/>
            <person name="Whitehead S.L."/>
            <person name="Wilkinson J.E."/>
            <person name="Willey D.L."/>
            <person name="Williams H."/>
            <person name="Wilming L."/>
            <person name="Wray P.W."/>
            <person name="Wu Z."/>
            <person name="Coulson A."/>
            <person name="Vaudin M."/>
            <person name="Sulston J.E."/>
            <person name="Durbin R.M."/>
            <person name="Hubbard T."/>
            <person name="Wooster R."/>
            <person name="Dunham I."/>
            <person name="Carter N.P."/>
            <person name="McVean G."/>
            <person name="Ross M.T."/>
            <person name="Harrow J."/>
            <person name="Olson M.V."/>
            <person name="Beck S."/>
            <person name="Rogers J."/>
            <person name="Bentley D.R."/>
        </authorList>
    </citation>
    <scope>NUCLEOTIDE SEQUENCE [LARGE SCALE GENOMIC DNA]</scope>
</reference>
<reference key="4">
    <citation type="submission" date="2005-09" db="EMBL/GenBank/DDBJ databases">
        <authorList>
            <person name="Mural R.J."/>
            <person name="Istrail S."/>
            <person name="Sutton G.G."/>
            <person name="Florea L."/>
            <person name="Halpern A.L."/>
            <person name="Mobarry C.M."/>
            <person name="Lippert R."/>
            <person name="Walenz B."/>
            <person name="Shatkay H."/>
            <person name="Dew I."/>
            <person name="Miller J.R."/>
            <person name="Flanigan M.J."/>
            <person name="Edwards N.J."/>
            <person name="Bolanos R."/>
            <person name="Fasulo D."/>
            <person name="Halldorsson B.V."/>
            <person name="Hannenhalli S."/>
            <person name="Turner R."/>
            <person name="Yooseph S."/>
            <person name="Lu F."/>
            <person name="Nusskern D.R."/>
            <person name="Shue B.C."/>
            <person name="Zheng X.H."/>
            <person name="Zhong F."/>
            <person name="Delcher A.L."/>
            <person name="Huson D.H."/>
            <person name="Kravitz S.A."/>
            <person name="Mouchard L."/>
            <person name="Reinert K."/>
            <person name="Remington K.A."/>
            <person name="Clark A.G."/>
            <person name="Waterman M.S."/>
            <person name="Eichler E.E."/>
            <person name="Adams M.D."/>
            <person name="Hunkapiller M.W."/>
            <person name="Myers E.W."/>
            <person name="Venter J.C."/>
        </authorList>
    </citation>
    <scope>NUCLEOTIDE SEQUENCE [LARGE SCALE GENOMIC DNA]</scope>
</reference>
<reference key="5">
    <citation type="journal article" date="2004" name="Genome Res.">
        <title>The status, quality, and expansion of the NIH full-length cDNA project: the Mammalian Gene Collection (MGC).</title>
        <authorList>
            <consortium name="The MGC Project Team"/>
        </authorList>
    </citation>
    <scope>NUCLEOTIDE SEQUENCE [LARGE SCALE MRNA] (ISOFORM 1)</scope>
    <source>
        <tissue>Skin</tissue>
    </source>
</reference>
<reference key="6">
    <citation type="journal article" date="1995" name="Science">
        <title>Coactivator and promoter-selective properties of RNA polymerase I TAFs.</title>
        <authorList>
            <person name="Beckmann H."/>
            <person name="Chen J.L."/>
            <person name="O'Brien T."/>
            <person name="Tjian R."/>
        </authorList>
    </citation>
    <scope>INTERACTION WITH UBTF</scope>
</reference>
<reference key="7">
    <citation type="journal article" date="2001" name="EMBO J.">
        <title>hRRN3 is essential in the SL1-mediated recruitment of RNA polymerase I to rRNA gene promoters.</title>
        <authorList>
            <person name="Miller G."/>
            <person name="Panov K.I."/>
            <person name="Friedrich J.K."/>
            <person name="Trinkle-Mulcahy L."/>
            <person name="Lamond A.I."/>
            <person name="Zomerdijk J.C.B.M."/>
        </authorList>
    </citation>
    <scope>FUNCTION OF THE SL1/TIF-IB COMPLEX</scope>
    <scope>SUBUNIT</scope>
    <scope>SUBCELLULAR LOCATION</scope>
</reference>
<reference key="8">
    <citation type="journal article" date="2001" name="Mol. Cell. Biol.">
        <title>A step subsequent to preinitiation complex assembly at the ribosomal RNA gene promoter is rate limiting for human RNA polymerase I-dependent transcription.</title>
        <authorList>
            <person name="Panov K.I."/>
            <person name="Friedrich J.K."/>
            <person name="Zomerdijk J.C."/>
        </authorList>
    </citation>
    <scope>FUNCTION OF THE SL1/TIF-IB COMPLEX</scope>
    <scope>SUBUNIT</scope>
    <scope>SUBCELLULAR LOCATION</scope>
</reference>
<reference key="9">
    <citation type="journal article" date="2005" name="J. Biol. Chem.">
        <title>TBP-TAF complex SL1 directs RNA polymerase I pre-initiation complex formation and stabilizes upstream binding factor at the rDNA promoter.</title>
        <authorList>
            <person name="Friedrich J.K."/>
            <person name="Panov K.I."/>
            <person name="Cabart P."/>
            <person name="Russell J."/>
            <person name="Zomerdijk J.C.B.M."/>
        </authorList>
    </citation>
    <scope>FUNCTION OF THE SL1/TIF-IB COMPLEX</scope>
</reference>
<reference key="10">
    <citation type="journal article" date="2010" name="EMBO J.">
        <title>Nucleolar retention of a translational C/EBPalpha isoform stimulates rDNA transcription and cell size.</title>
        <authorList>
            <person name="Muller C."/>
            <person name="Bremer A."/>
            <person name="Schreiber S."/>
            <person name="Eichwald S."/>
            <person name="Calkhoven C.F."/>
        </authorList>
    </citation>
    <scope>INTERACTION WITH CEBPA</scope>
</reference>
<name>TAF1A_HUMAN</name>
<comment type="function">
    <text evidence="1 2 3 6">Component of the transcription factor SL1/TIF-IB complex, which is involved in the assembly of the PIC (pre-initiation complex) during RNA polymerase I-dependent transcription. The rate of PIC formation probably is primarily dependent on the rate of association of SL1/TIF-IB with the rDNA promoter. SL1/TIF-IB is involved in stabilization of nucleolar transcription factor 1/UBTF on rDNA. Formation of SL1/TIF-IB excludes the association of TBP with TFIID subunits.</text>
</comment>
<comment type="subunit">
    <text evidence="1 2 4 5 6">Component of the transcription factor SL1/TIF-IB complex, composed of TBP and at least TAF1A, TAF1B, TAF1C and TAF1D. In the complex interacts directly with TBP, TAF1A and TAF1B. Interaction of the SL1/TIF-IB subunits with TBP excludes interaction of TBP with the transcription factor IID (TFIID) subunits. Interacts with UBFT. Interacts with CEBPA (isoform 1 and isoform 4) (PubMed:20075868). Part of Pol I pre-initiation complex (PIC), in which Pol I core assembles with RRN3 and promoter-bound UTBF and SL1/TIF-IB complex.</text>
</comment>
<comment type="interaction">
    <interactant intactId="EBI-2510647">
        <id>Q15573</id>
    </interactant>
    <interactant intactId="EBI-3920396">
        <id>Q6ZUT1</id>
        <label>NKAPD1</label>
    </interactant>
    <organismsDiffer>false</organismsDiffer>
    <experiments>3</experiments>
</comment>
<comment type="interaction">
    <interactant intactId="EBI-2510647">
        <id>Q15573</id>
    </interactant>
    <interactant intactId="EBI-10180231">
        <id>Q6ZUT1-2</id>
        <label>NKAPD1</label>
    </interactant>
    <organismsDiffer>false</organismsDiffer>
    <experiments>3</experiments>
</comment>
<comment type="interaction">
    <interactant intactId="EBI-2510647">
        <id>Q15573</id>
    </interactant>
    <interactant intactId="EBI-1053182">
        <id>Q01105</id>
        <label>SET</label>
    </interactant>
    <organismsDiffer>false</organismsDiffer>
    <experiments>2</experiments>
</comment>
<comment type="interaction">
    <interactant intactId="EBI-2510647">
        <id>Q15573</id>
    </interactant>
    <interactant intactId="EBI-1560239">
        <id>Q53T94</id>
        <label>TAF1B</label>
    </interactant>
    <organismsDiffer>false</organismsDiffer>
    <experiments>3</experiments>
</comment>
<comment type="interaction">
    <interactant intactId="EBI-2510647">
        <id>Q15573</id>
    </interactant>
    <interactant intactId="EBI-355371">
        <id>P20226</id>
        <label>TBP</label>
    </interactant>
    <organismsDiffer>false</organismsDiffer>
    <experiments>4</experiments>
</comment>
<comment type="subcellular location">
    <subcellularLocation>
        <location evidence="8 9">Nucleus</location>
        <location evidence="8 9">Nucleolus</location>
    </subcellularLocation>
</comment>
<comment type="alternative products">
    <event type="alternative splicing"/>
    <isoform>
        <id>Q15573-1</id>
        <name>1</name>
        <sequence type="displayed"/>
    </isoform>
    <isoform>
        <id>Q15573-2</id>
        <name>2</name>
        <sequence type="described" ref="VSP_017635"/>
    </isoform>
</comment>
<organism>
    <name type="scientific">Homo sapiens</name>
    <name type="common">Human</name>
    <dbReference type="NCBI Taxonomy" id="9606"/>
    <lineage>
        <taxon>Eukaryota</taxon>
        <taxon>Metazoa</taxon>
        <taxon>Chordata</taxon>
        <taxon>Craniata</taxon>
        <taxon>Vertebrata</taxon>
        <taxon>Euteleostomi</taxon>
        <taxon>Mammalia</taxon>
        <taxon>Eutheria</taxon>
        <taxon>Euarchontoglires</taxon>
        <taxon>Primates</taxon>
        <taxon>Haplorrhini</taxon>
        <taxon>Catarrhini</taxon>
        <taxon>Hominidae</taxon>
        <taxon>Homo</taxon>
    </lineage>
</organism>
<gene>
    <name type="primary">TAF1A</name>
</gene>
<keyword id="KW-0025">Alternative splicing</keyword>
<keyword id="KW-0903">Direct protein sequencing</keyword>
<keyword id="KW-0238">DNA-binding</keyword>
<keyword id="KW-0539">Nucleus</keyword>
<keyword id="KW-1267">Proteomics identification</keyword>
<keyword id="KW-1185">Reference proteome</keyword>
<keyword id="KW-0804">Transcription</keyword>
<keyword id="KW-0805">Transcription regulation</keyword>